<evidence type="ECO:0000250" key="1"/>
<evidence type="ECO:0000255" key="2">
    <source>
        <dbReference type="HAMAP-Rule" id="MF_01640"/>
    </source>
</evidence>
<comment type="function">
    <text evidence="2">Catalyzes the NAD-dependent conversion of D-erythrose 4-phosphate to 4-phosphoerythronate.</text>
</comment>
<comment type="catalytic activity">
    <reaction evidence="2">
        <text>D-erythrose 4-phosphate + NAD(+) + H2O = 4-phospho-D-erythronate + NADH + 2 H(+)</text>
        <dbReference type="Rhea" id="RHEA:12056"/>
        <dbReference type="ChEBI" id="CHEBI:15377"/>
        <dbReference type="ChEBI" id="CHEBI:15378"/>
        <dbReference type="ChEBI" id="CHEBI:16897"/>
        <dbReference type="ChEBI" id="CHEBI:57540"/>
        <dbReference type="ChEBI" id="CHEBI:57945"/>
        <dbReference type="ChEBI" id="CHEBI:58766"/>
        <dbReference type="EC" id="1.2.1.72"/>
    </reaction>
</comment>
<comment type="pathway">
    <text evidence="2">Cofactor biosynthesis; pyridoxine 5'-phosphate biosynthesis; pyridoxine 5'-phosphate from D-erythrose 4-phosphate: step 1/5.</text>
</comment>
<comment type="subunit">
    <text evidence="2">Homotetramer.</text>
</comment>
<comment type="subcellular location">
    <subcellularLocation>
        <location evidence="2">Cytoplasm</location>
    </subcellularLocation>
</comment>
<comment type="similarity">
    <text evidence="2">Belongs to the glyceraldehyde-3-phosphate dehydrogenase family. Epd subfamily.</text>
</comment>
<name>E4PD_SHIDS</name>
<feature type="initiator methionine" description="Removed" evidence="1">
    <location>
        <position position="1"/>
    </location>
</feature>
<feature type="chain" id="PRO_0000293170" description="D-erythrose-4-phosphate dehydrogenase">
    <location>
        <begin position="2"/>
        <end position="339"/>
    </location>
</feature>
<feature type="active site" description="Nucleophile" evidence="2">
    <location>
        <position position="155"/>
    </location>
</feature>
<feature type="binding site" evidence="2">
    <location>
        <begin position="12"/>
        <end position="13"/>
    </location>
    <ligand>
        <name>NAD(+)</name>
        <dbReference type="ChEBI" id="CHEBI:57540"/>
    </ligand>
</feature>
<feature type="binding site" evidence="2">
    <location>
        <position position="81"/>
    </location>
    <ligand>
        <name>NAD(+)</name>
        <dbReference type="ChEBI" id="CHEBI:57540"/>
    </ligand>
</feature>
<feature type="binding site" evidence="2">
    <location>
        <begin position="154"/>
        <end position="156"/>
    </location>
    <ligand>
        <name>substrate</name>
    </ligand>
</feature>
<feature type="binding site" evidence="2">
    <location>
        <position position="200"/>
    </location>
    <ligand>
        <name>substrate</name>
    </ligand>
</feature>
<feature type="binding site" evidence="2">
    <location>
        <begin position="213"/>
        <end position="214"/>
    </location>
    <ligand>
        <name>substrate</name>
    </ligand>
</feature>
<feature type="binding site" evidence="2">
    <location>
        <position position="236"/>
    </location>
    <ligand>
        <name>substrate</name>
    </ligand>
</feature>
<feature type="binding site" evidence="2">
    <location>
        <position position="318"/>
    </location>
    <ligand>
        <name>NAD(+)</name>
        <dbReference type="ChEBI" id="CHEBI:57540"/>
    </ligand>
</feature>
<feature type="site" description="Activates thiol group during catalysis" evidence="2">
    <location>
        <position position="182"/>
    </location>
</feature>
<dbReference type="EC" id="1.2.1.72" evidence="2"/>
<dbReference type="EMBL" id="CP000034">
    <property type="protein sequence ID" value="ABB63168.1"/>
    <property type="molecule type" value="Genomic_DNA"/>
</dbReference>
<dbReference type="RefSeq" id="WP_000218474.1">
    <property type="nucleotide sequence ID" value="NC_007606.1"/>
</dbReference>
<dbReference type="RefSeq" id="YP_404659.1">
    <property type="nucleotide sequence ID" value="NC_007606.1"/>
</dbReference>
<dbReference type="SMR" id="Q32BY7"/>
<dbReference type="STRING" id="300267.SDY_3155"/>
<dbReference type="EnsemblBacteria" id="ABB63168">
    <property type="protein sequence ID" value="ABB63168"/>
    <property type="gene ID" value="SDY_3155"/>
</dbReference>
<dbReference type="KEGG" id="sdy:SDY_3155"/>
<dbReference type="PATRIC" id="fig|300267.13.peg.3768"/>
<dbReference type="HOGENOM" id="CLU_030140_0_2_6"/>
<dbReference type="UniPathway" id="UPA00244">
    <property type="reaction ID" value="UER00309"/>
</dbReference>
<dbReference type="Proteomes" id="UP000002716">
    <property type="component" value="Chromosome"/>
</dbReference>
<dbReference type="GO" id="GO:0005737">
    <property type="term" value="C:cytoplasm"/>
    <property type="evidence" value="ECO:0007669"/>
    <property type="project" value="UniProtKB-SubCell"/>
</dbReference>
<dbReference type="GO" id="GO:0048001">
    <property type="term" value="F:erythrose-4-phosphate dehydrogenase activity"/>
    <property type="evidence" value="ECO:0007669"/>
    <property type="project" value="UniProtKB-UniRule"/>
</dbReference>
<dbReference type="GO" id="GO:0051287">
    <property type="term" value="F:NAD binding"/>
    <property type="evidence" value="ECO:0007669"/>
    <property type="project" value="InterPro"/>
</dbReference>
<dbReference type="GO" id="GO:0042823">
    <property type="term" value="P:pyridoxal phosphate biosynthetic process"/>
    <property type="evidence" value="ECO:0007669"/>
    <property type="project" value="UniProtKB-UniRule"/>
</dbReference>
<dbReference type="GO" id="GO:0008615">
    <property type="term" value="P:pyridoxine biosynthetic process"/>
    <property type="evidence" value="ECO:0007669"/>
    <property type="project" value="UniProtKB-UniRule"/>
</dbReference>
<dbReference type="CDD" id="cd23937">
    <property type="entry name" value="GAPDH_C_E4PDH"/>
    <property type="match status" value="1"/>
</dbReference>
<dbReference type="CDD" id="cd17892">
    <property type="entry name" value="GAPDH_N_E4PDH"/>
    <property type="match status" value="1"/>
</dbReference>
<dbReference type="FunFam" id="3.30.360.10:FF:000007">
    <property type="entry name" value="D-erythrose-4-phosphate dehydrogenase"/>
    <property type="match status" value="1"/>
</dbReference>
<dbReference type="FunFam" id="3.40.50.720:FF:000001">
    <property type="entry name" value="Glyceraldehyde-3-phosphate dehydrogenase"/>
    <property type="match status" value="1"/>
</dbReference>
<dbReference type="Gene3D" id="3.30.360.10">
    <property type="entry name" value="Dihydrodipicolinate Reductase, domain 2"/>
    <property type="match status" value="1"/>
</dbReference>
<dbReference type="Gene3D" id="3.40.50.720">
    <property type="entry name" value="NAD(P)-binding Rossmann-like Domain"/>
    <property type="match status" value="1"/>
</dbReference>
<dbReference type="HAMAP" id="MF_01640">
    <property type="entry name" value="E4P_dehydrog"/>
    <property type="match status" value="1"/>
</dbReference>
<dbReference type="InterPro" id="IPR006422">
    <property type="entry name" value="E4P_DH_bac"/>
</dbReference>
<dbReference type="InterPro" id="IPR020831">
    <property type="entry name" value="GlycerAld/Erythrose_P_DH"/>
</dbReference>
<dbReference type="InterPro" id="IPR020830">
    <property type="entry name" value="GlycerAld_3-P_DH_AS"/>
</dbReference>
<dbReference type="InterPro" id="IPR020829">
    <property type="entry name" value="GlycerAld_3-P_DH_cat"/>
</dbReference>
<dbReference type="InterPro" id="IPR020828">
    <property type="entry name" value="GlycerAld_3-P_DH_NAD(P)-bd"/>
</dbReference>
<dbReference type="InterPro" id="IPR036291">
    <property type="entry name" value="NAD(P)-bd_dom_sf"/>
</dbReference>
<dbReference type="NCBIfam" id="TIGR01532">
    <property type="entry name" value="E4PD_g-proteo"/>
    <property type="match status" value="1"/>
</dbReference>
<dbReference type="NCBIfam" id="NF010058">
    <property type="entry name" value="PRK13535.1"/>
    <property type="match status" value="1"/>
</dbReference>
<dbReference type="PANTHER" id="PTHR43148">
    <property type="entry name" value="GLYCERALDEHYDE-3-PHOSPHATE DEHYDROGENASE 2"/>
    <property type="match status" value="1"/>
</dbReference>
<dbReference type="Pfam" id="PF02800">
    <property type="entry name" value="Gp_dh_C"/>
    <property type="match status" value="1"/>
</dbReference>
<dbReference type="Pfam" id="PF00044">
    <property type="entry name" value="Gp_dh_N"/>
    <property type="match status" value="1"/>
</dbReference>
<dbReference type="PIRSF" id="PIRSF000149">
    <property type="entry name" value="GAP_DH"/>
    <property type="match status" value="1"/>
</dbReference>
<dbReference type="PRINTS" id="PR00078">
    <property type="entry name" value="G3PDHDRGNASE"/>
</dbReference>
<dbReference type="SMART" id="SM00846">
    <property type="entry name" value="Gp_dh_N"/>
    <property type="match status" value="1"/>
</dbReference>
<dbReference type="SUPFAM" id="SSF55347">
    <property type="entry name" value="Glyceraldehyde-3-phosphate dehydrogenase-like, C-terminal domain"/>
    <property type="match status" value="1"/>
</dbReference>
<dbReference type="SUPFAM" id="SSF51735">
    <property type="entry name" value="NAD(P)-binding Rossmann-fold domains"/>
    <property type="match status" value="1"/>
</dbReference>
<dbReference type="PROSITE" id="PS00071">
    <property type="entry name" value="GAPDH"/>
    <property type="match status" value="1"/>
</dbReference>
<protein>
    <recommendedName>
        <fullName evidence="2">D-erythrose-4-phosphate dehydrogenase</fullName>
        <shortName evidence="2">E4PDH</shortName>
        <ecNumber evidence="2">1.2.1.72</ecNumber>
    </recommendedName>
</protein>
<gene>
    <name evidence="2" type="primary">epd</name>
    <name type="ordered locus">SDY_3155</name>
</gene>
<sequence length="339" mass="37313">MTVRVAINGFGRIGRNVVRALYESGRRAEITVVAINELADAAGMAHLLKYDTSHGRFAWEVRQERDQLFVGDDAIRVLHERSLQSLPWRELGVDVVLDCTGVYGSREHGEAHIAAGAKKVLFSHPGSNDLDATVVYGVNQDQLRAEHRIVSNASCTTNCIIPVIKLLDDAYGIESGTVTTIHSAMHDQQVIDAYHPDLRRTRAASQSIIPIDTKLAAGITRFFPQFNDRFEAIAVRVPTINVTAIDLSVTVKKPVKANEVNLLLQKAAQGAFHGIVDYTELPLVSVDFNHDPHSAIVDGTQTRVSGAHLIKTLVWCDNEWGFANRMLDTTLAMATVAFR</sequence>
<organism>
    <name type="scientific">Shigella dysenteriae serotype 1 (strain Sd197)</name>
    <dbReference type="NCBI Taxonomy" id="300267"/>
    <lineage>
        <taxon>Bacteria</taxon>
        <taxon>Pseudomonadati</taxon>
        <taxon>Pseudomonadota</taxon>
        <taxon>Gammaproteobacteria</taxon>
        <taxon>Enterobacterales</taxon>
        <taxon>Enterobacteriaceae</taxon>
        <taxon>Shigella</taxon>
    </lineage>
</organism>
<proteinExistence type="inferred from homology"/>
<keyword id="KW-0963">Cytoplasm</keyword>
<keyword id="KW-0520">NAD</keyword>
<keyword id="KW-0560">Oxidoreductase</keyword>
<keyword id="KW-0664">Pyridoxine biosynthesis</keyword>
<keyword id="KW-1185">Reference proteome</keyword>
<reference key="1">
    <citation type="journal article" date="2005" name="Nucleic Acids Res.">
        <title>Genome dynamics and diversity of Shigella species, the etiologic agents of bacillary dysentery.</title>
        <authorList>
            <person name="Yang F."/>
            <person name="Yang J."/>
            <person name="Zhang X."/>
            <person name="Chen L."/>
            <person name="Jiang Y."/>
            <person name="Yan Y."/>
            <person name="Tang X."/>
            <person name="Wang J."/>
            <person name="Xiong Z."/>
            <person name="Dong J."/>
            <person name="Xue Y."/>
            <person name="Zhu Y."/>
            <person name="Xu X."/>
            <person name="Sun L."/>
            <person name="Chen S."/>
            <person name="Nie H."/>
            <person name="Peng J."/>
            <person name="Xu J."/>
            <person name="Wang Y."/>
            <person name="Yuan Z."/>
            <person name="Wen Y."/>
            <person name="Yao Z."/>
            <person name="Shen Y."/>
            <person name="Qiang B."/>
            <person name="Hou Y."/>
            <person name="Yu J."/>
            <person name="Jin Q."/>
        </authorList>
    </citation>
    <scope>NUCLEOTIDE SEQUENCE [LARGE SCALE GENOMIC DNA]</scope>
    <source>
        <strain>Sd197</strain>
    </source>
</reference>
<accession>Q32BY7</accession>